<protein>
    <recommendedName>
        <fullName evidence="1">Pantothenate kinase</fullName>
        <ecNumber evidence="1">2.7.1.33</ecNumber>
    </recommendedName>
    <alternativeName>
        <fullName evidence="1">Pantothenic acid kinase</fullName>
    </alternativeName>
</protein>
<keyword id="KW-0067">ATP-binding</keyword>
<keyword id="KW-0173">Coenzyme A biosynthesis</keyword>
<keyword id="KW-0963">Cytoplasm</keyword>
<keyword id="KW-0418">Kinase</keyword>
<keyword id="KW-0547">Nucleotide-binding</keyword>
<keyword id="KW-0808">Transferase</keyword>
<dbReference type="EC" id="2.7.1.33" evidence="1"/>
<dbReference type="EMBL" id="CP001138">
    <property type="protein sequence ID" value="ACH52912.1"/>
    <property type="molecule type" value="Genomic_DNA"/>
</dbReference>
<dbReference type="RefSeq" id="WP_000023068.1">
    <property type="nucleotide sequence ID" value="NC_011149.1"/>
</dbReference>
<dbReference type="SMR" id="B5F0V8"/>
<dbReference type="KEGG" id="sea:SeAg_B4382"/>
<dbReference type="HOGENOM" id="CLU_053818_1_1_6"/>
<dbReference type="UniPathway" id="UPA00241">
    <property type="reaction ID" value="UER00352"/>
</dbReference>
<dbReference type="Proteomes" id="UP000008819">
    <property type="component" value="Chromosome"/>
</dbReference>
<dbReference type="GO" id="GO:0005737">
    <property type="term" value="C:cytoplasm"/>
    <property type="evidence" value="ECO:0007669"/>
    <property type="project" value="UniProtKB-SubCell"/>
</dbReference>
<dbReference type="GO" id="GO:0005524">
    <property type="term" value="F:ATP binding"/>
    <property type="evidence" value="ECO:0007669"/>
    <property type="project" value="UniProtKB-UniRule"/>
</dbReference>
<dbReference type="GO" id="GO:0004594">
    <property type="term" value="F:pantothenate kinase activity"/>
    <property type="evidence" value="ECO:0007669"/>
    <property type="project" value="UniProtKB-UniRule"/>
</dbReference>
<dbReference type="GO" id="GO:0015937">
    <property type="term" value="P:coenzyme A biosynthetic process"/>
    <property type="evidence" value="ECO:0007669"/>
    <property type="project" value="UniProtKB-UniRule"/>
</dbReference>
<dbReference type="CDD" id="cd02025">
    <property type="entry name" value="PanK"/>
    <property type="match status" value="1"/>
</dbReference>
<dbReference type="FunFam" id="3.40.50.300:FF:000242">
    <property type="entry name" value="Pantothenate kinase"/>
    <property type="match status" value="1"/>
</dbReference>
<dbReference type="Gene3D" id="3.40.50.300">
    <property type="entry name" value="P-loop containing nucleotide triphosphate hydrolases"/>
    <property type="match status" value="1"/>
</dbReference>
<dbReference type="HAMAP" id="MF_00215">
    <property type="entry name" value="Pantothen_kinase_1"/>
    <property type="match status" value="1"/>
</dbReference>
<dbReference type="InterPro" id="IPR027417">
    <property type="entry name" value="P-loop_NTPase"/>
</dbReference>
<dbReference type="InterPro" id="IPR004566">
    <property type="entry name" value="PanK"/>
</dbReference>
<dbReference type="InterPro" id="IPR006083">
    <property type="entry name" value="PRK/URK"/>
</dbReference>
<dbReference type="NCBIfam" id="TIGR00554">
    <property type="entry name" value="panK_bact"/>
    <property type="match status" value="1"/>
</dbReference>
<dbReference type="PANTHER" id="PTHR10285">
    <property type="entry name" value="URIDINE KINASE"/>
    <property type="match status" value="1"/>
</dbReference>
<dbReference type="Pfam" id="PF00485">
    <property type="entry name" value="PRK"/>
    <property type="match status" value="1"/>
</dbReference>
<dbReference type="PIRSF" id="PIRSF000545">
    <property type="entry name" value="Pantothenate_kin"/>
    <property type="match status" value="1"/>
</dbReference>
<dbReference type="SUPFAM" id="SSF52540">
    <property type="entry name" value="P-loop containing nucleoside triphosphate hydrolases"/>
    <property type="match status" value="1"/>
</dbReference>
<gene>
    <name evidence="1" type="primary">coaA</name>
    <name type="ordered locus">SeAg_B4382</name>
</gene>
<evidence type="ECO:0000255" key="1">
    <source>
        <dbReference type="HAMAP-Rule" id="MF_00215"/>
    </source>
</evidence>
<proteinExistence type="inferred from homology"/>
<reference key="1">
    <citation type="journal article" date="2011" name="J. Bacteriol.">
        <title>Comparative genomics of 28 Salmonella enterica isolates: evidence for CRISPR-mediated adaptive sublineage evolution.</title>
        <authorList>
            <person name="Fricke W.F."/>
            <person name="Mammel M.K."/>
            <person name="McDermott P.F."/>
            <person name="Tartera C."/>
            <person name="White D.G."/>
            <person name="Leclerc J.E."/>
            <person name="Ravel J."/>
            <person name="Cebula T.A."/>
        </authorList>
    </citation>
    <scope>NUCLEOTIDE SEQUENCE [LARGE SCALE GENOMIC DNA]</scope>
    <source>
        <strain>SL483</strain>
    </source>
</reference>
<sequence>MSIKEQSLMTPYLQFDRSQWAALRDSVPMTLTEDEIAQLKGINEDLSLEEVAEIYLPLSRLLNFYISSNLRRQAVLEQFLGTNGQRIPYIISIAGSVAVGKSTTARVLQALLSRWPEHRRVELITTDGFLHPNQVLKERGLMKKKGFPESYDMHRLVKFVSDLKSGVPNVTAPVYSHLIYDVIPEGDKTVAQPDILILEGLNVLQSGMDYPHDPHHVFVSDFVDFSIYVDAPEELLQTWYINRFLKFREGAFTDPDSYFHNYAKLSKEEAVNTAASLWKEINWLNLKQNILPTRERASLIMTKSANHAVEQVRLRK</sequence>
<accession>B5F0V8</accession>
<feature type="chain" id="PRO_1000099943" description="Pantothenate kinase">
    <location>
        <begin position="1"/>
        <end position="316"/>
    </location>
</feature>
<feature type="binding site" evidence="1">
    <location>
        <begin position="95"/>
        <end position="102"/>
    </location>
    <ligand>
        <name>ATP</name>
        <dbReference type="ChEBI" id="CHEBI:30616"/>
    </ligand>
</feature>
<comment type="catalytic activity">
    <reaction evidence="1">
        <text>(R)-pantothenate + ATP = (R)-4'-phosphopantothenate + ADP + H(+)</text>
        <dbReference type="Rhea" id="RHEA:16373"/>
        <dbReference type="ChEBI" id="CHEBI:10986"/>
        <dbReference type="ChEBI" id="CHEBI:15378"/>
        <dbReference type="ChEBI" id="CHEBI:29032"/>
        <dbReference type="ChEBI" id="CHEBI:30616"/>
        <dbReference type="ChEBI" id="CHEBI:456216"/>
        <dbReference type="EC" id="2.7.1.33"/>
    </reaction>
</comment>
<comment type="pathway">
    <text evidence="1">Cofactor biosynthesis; coenzyme A biosynthesis; CoA from (R)-pantothenate: step 1/5.</text>
</comment>
<comment type="subcellular location">
    <subcellularLocation>
        <location evidence="1">Cytoplasm</location>
    </subcellularLocation>
</comment>
<comment type="similarity">
    <text evidence="1">Belongs to the prokaryotic pantothenate kinase family.</text>
</comment>
<organism>
    <name type="scientific">Salmonella agona (strain SL483)</name>
    <dbReference type="NCBI Taxonomy" id="454166"/>
    <lineage>
        <taxon>Bacteria</taxon>
        <taxon>Pseudomonadati</taxon>
        <taxon>Pseudomonadota</taxon>
        <taxon>Gammaproteobacteria</taxon>
        <taxon>Enterobacterales</taxon>
        <taxon>Enterobacteriaceae</taxon>
        <taxon>Salmonella</taxon>
    </lineage>
</organism>
<name>COAA_SALA4</name>